<accession>P45774</accession>
<accession>Q9JPZ7</accession>
<dbReference type="EMBL" id="L33796">
    <property type="protein sequence ID" value="AAA58789.1"/>
    <property type="molecule type" value="Genomic_DNA"/>
</dbReference>
<dbReference type="EMBL" id="AE003852">
    <property type="protein sequence ID" value="AAF95869.1"/>
    <property type="molecule type" value="Genomic_DNA"/>
</dbReference>
<dbReference type="PIR" id="C82041">
    <property type="entry name" value="C82041"/>
</dbReference>
<dbReference type="RefSeq" id="NP_232356.1">
    <property type="nucleotide sequence ID" value="NC_002505.1"/>
</dbReference>
<dbReference type="PDB" id="2QV8">
    <property type="method" value="X-ray"/>
    <property type="resolution" value="2.00 A"/>
    <property type="chains" value="A/B=36-194"/>
</dbReference>
<dbReference type="PDB" id="4DQ9">
    <property type="method" value="X-ray"/>
    <property type="resolution" value="1.59 A"/>
    <property type="chains" value="A/B=33-194"/>
</dbReference>
<dbReference type="PDBsum" id="2QV8"/>
<dbReference type="PDBsum" id="4DQ9"/>
<dbReference type="SMR" id="P45774"/>
<dbReference type="STRING" id="243277.VC_2729"/>
<dbReference type="DNASU" id="2614892"/>
<dbReference type="EnsemblBacteria" id="AAF95869">
    <property type="protein sequence ID" value="AAF95869"/>
    <property type="gene ID" value="VC_2729"/>
</dbReference>
<dbReference type="KEGG" id="vch:VC_2729"/>
<dbReference type="PATRIC" id="fig|243277.26.peg.2604"/>
<dbReference type="eggNOG" id="COG2165">
    <property type="taxonomic scope" value="Bacteria"/>
</dbReference>
<dbReference type="HOGENOM" id="CLU_111963_0_1_6"/>
<dbReference type="EvolutionaryTrace" id="P45774"/>
<dbReference type="Proteomes" id="UP000000584">
    <property type="component" value="Chromosome 1"/>
</dbReference>
<dbReference type="GO" id="GO:0005886">
    <property type="term" value="C:plasma membrane"/>
    <property type="evidence" value="ECO:0007669"/>
    <property type="project" value="UniProtKB-SubCell"/>
</dbReference>
<dbReference type="GO" id="GO:0015627">
    <property type="term" value="C:type II protein secretion system complex"/>
    <property type="evidence" value="ECO:0007669"/>
    <property type="project" value="InterPro"/>
</dbReference>
<dbReference type="GO" id="GO:0015628">
    <property type="term" value="P:protein secretion by the type II secretion system"/>
    <property type="evidence" value="ECO:0000318"/>
    <property type="project" value="GO_Central"/>
</dbReference>
<dbReference type="Gene3D" id="3.55.40.10">
    <property type="entry name" value="minor pseudopilin epsh domain"/>
    <property type="match status" value="1"/>
</dbReference>
<dbReference type="InterPro" id="IPR012902">
    <property type="entry name" value="N_methyl_site"/>
</dbReference>
<dbReference type="InterPro" id="IPR045584">
    <property type="entry name" value="Pilin-like"/>
</dbReference>
<dbReference type="InterPro" id="IPR022346">
    <property type="entry name" value="T2SS_GspH"/>
</dbReference>
<dbReference type="InterPro" id="IPR002416">
    <property type="entry name" value="T2SS_protein-GspH"/>
</dbReference>
<dbReference type="InterPro" id="IPR051621">
    <property type="entry name" value="T2SS_protein_J"/>
</dbReference>
<dbReference type="InterPro" id="IPR049875">
    <property type="entry name" value="TypeII_GspH"/>
</dbReference>
<dbReference type="NCBIfam" id="TIGR02532">
    <property type="entry name" value="IV_pilin_GFxxxE"/>
    <property type="match status" value="1"/>
</dbReference>
<dbReference type="NCBIfam" id="TIGR01708">
    <property type="entry name" value="typeII_sec_gspH"/>
    <property type="match status" value="1"/>
</dbReference>
<dbReference type="PANTHER" id="PTHR39583:SF2">
    <property type="entry name" value="TYPE II SECRETION SYSTEM PROTEIN J"/>
    <property type="match status" value="1"/>
</dbReference>
<dbReference type="PANTHER" id="PTHR39583">
    <property type="entry name" value="TYPE II SECRETION SYSTEM PROTEIN J-RELATED"/>
    <property type="match status" value="1"/>
</dbReference>
<dbReference type="Pfam" id="PF12019">
    <property type="entry name" value="GspH"/>
    <property type="match status" value="1"/>
</dbReference>
<dbReference type="PRINTS" id="PR00885">
    <property type="entry name" value="BCTERIALGSPH"/>
</dbReference>
<dbReference type="SUPFAM" id="SSF54523">
    <property type="entry name" value="Pili subunits"/>
    <property type="match status" value="1"/>
</dbReference>
<dbReference type="PROSITE" id="PS00409">
    <property type="entry name" value="PROKAR_NTER_METHYL"/>
    <property type="match status" value="1"/>
</dbReference>
<comment type="function">
    <text evidence="1 4 5">Component of the type II secretion system required for the energy-dependent secretion of extracellular factors such as proteases and toxins from the periplasm (By similarity). Part of the pseudopilus tip complex that is critical for the recognition and binding of secretion substrates (PubMed:18241884, PubMed:24316251).</text>
</comment>
<comment type="subunit">
    <text evidence="1">Type II secretion is composed of four main components: the outer membrane complex, the inner membrane complex, the cytoplasmic secretion ATPase and the periplasm-spanning pseudopilus. Interacts with core component EpsG.</text>
</comment>
<comment type="subcellular location">
    <subcellularLocation>
        <location evidence="1">Cell inner membrane</location>
        <topology evidence="2">Single-pass membrane protein</topology>
    </subcellularLocation>
</comment>
<comment type="PTM">
    <text evidence="1">Cleaved by prepilin peptidase.</text>
</comment>
<comment type="PTM">
    <text evidence="1">Methylated by prepilin peptidase at the amino group of the N-terminal phenylalanine once the leader sequence is cleaved by prepilin peptidase.</text>
</comment>
<comment type="similarity">
    <text evidence="6">Belongs to the GSP H family.</text>
</comment>
<evidence type="ECO:0000250" key="1">
    <source>
        <dbReference type="UniProtKB" id="Q00515"/>
    </source>
</evidence>
<evidence type="ECO:0000255" key="2"/>
<evidence type="ECO:0000255" key="3">
    <source>
        <dbReference type="PROSITE-ProRule" id="PRU01070"/>
    </source>
</evidence>
<evidence type="ECO:0000269" key="4">
    <source>
    </source>
</evidence>
<evidence type="ECO:0000269" key="5">
    <source>
    </source>
</evidence>
<evidence type="ECO:0000305" key="6"/>
<evidence type="ECO:0007829" key="7">
    <source>
        <dbReference type="PDB" id="4DQ9"/>
    </source>
</evidence>
<reference key="1">
    <citation type="thesis" date="1994" institute="Michigan State University" country="United States">
        <title>Organization of the general secretion pathway genes in Vibrio cholerae.</title>
        <authorList>
            <person name="Overbye L.J."/>
        </authorList>
    </citation>
    <scope>NUCLEOTIDE SEQUENCE [GENOMIC DNA]</scope>
    <source>
        <strain>El Tor TRH7000</strain>
    </source>
</reference>
<reference key="2">
    <citation type="journal article" date="2000" name="Nature">
        <title>DNA sequence of both chromosomes of the cholera pathogen Vibrio cholerae.</title>
        <authorList>
            <person name="Heidelberg J.F."/>
            <person name="Eisen J.A."/>
            <person name="Nelson W.C."/>
            <person name="Clayton R.A."/>
            <person name="Gwinn M.L."/>
            <person name="Dodson R.J."/>
            <person name="Haft D.H."/>
            <person name="Hickey E.K."/>
            <person name="Peterson J.D."/>
            <person name="Umayam L.A."/>
            <person name="Gill S.R."/>
            <person name="Nelson K.E."/>
            <person name="Read T.D."/>
            <person name="Tettelin H."/>
            <person name="Richardson D.L."/>
            <person name="Ermolaeva M.D."/>
            <person name="Vamathevan J.J."/>
            <person name="Bass S."/>
            <person name="Qin H."/>
            <person name="Dragoi I."/>
            <person name="Sellers P."/>
            <person name="McDonald L.A."/>
            <person name="Utterback T.R."/>
            <person name="Fleischmann R.D."/>
            <person name="Nierman W.C."/>
            <person name="White O."/>
            <person name="Salzberg S.L."/>
            <person name="Smith H.O."/>
            <person name="Colwell R.R."/>
            <person name="Mekalanos J.J."/>
            <person name="Venter J.C."/>
            <person name="Fraser C.M."/>
        </authorList>
    </citation>
    <scope>NUCLEOTIDE SEQUENCE [LARGE SCALE GENOMIC DNA]</scope>
    <source>
        <strain>ATCC 39315 / El Tor Inaba N16961</strain>
    </source>
</reference>
<reference key="3">
    <citation type="journal article" date="2008" name="J. Mol. Biol.">
        <title>Structure of the minor pseudopilin EpsH from the Type 2 secretion system of Vibrio cholerae.</title>
        <authorList>
            <person name="Yanez M.E."/>
            <person name="Korotkov K.V."/>
            <person name="Abendroth J."/>
            <person name="Hol W.G."/>
        </authorList>
    </citation>
    <scope>X-RAY CRYSTALLOGRAPHY (2.00 ANGSTROMS) OF 36-194</scope>
    <scope>FUNCTION</scope>
</reference>
<reference key="4">
    <citation type="journal article" date="2014" name="Biochim. Biophys. Acta">
        <title>The 1.59Aa resolution structure of the minor pseudopilin EpsH of Vibrio cholerae reveals a long flexible loop.</title>
        <authorList>
            <person name="Raghunathan K."/>
            <person name="Vago F.S."/>
            <person name="Grindem D."/>
            <person name="Ball T."/>
            <person name="Wedemeyer W.J."/>
            <person name="Bagdasarian M."/>
            <person name="Arvidson D.N."/>
        </authorList>
    </citation>
    <scope>X-RAY CRYSTALLOGRAPHY (1.59 ANGSTROMS) OF 33-194</scope>
    <scope>FUNCTION</scope>
</reference>
<proteinExistence type="evidence at protein level"/>
<keyword id="KW-0002">3D-structure</keyword>
<keyword id="KW-0997">Cell inner membrane</keyword>
<keyword id="KW-1003">Cell membrane</keyword>
<keyword id="KW-0472">Membrane</keyword>
<keyword id="KW-0488">Methylation</keyword>
<keyword id="KW-0653">Protein transport</keyword>
<keyword id="KW-1185">Reference proteome</keyword>
<keyword id="KW-0812">Transmembrane</keyword>
<keyword id="KW-1133">Transmembrane helix</keyword>
<keyword id="KW-0813">Transport</keyword>
<sequence>MTATRGFTLLEILLVLVLVSASAVAVIATFPVSVKDEAKISAQSFYQRLLLLNEEAILSGQDFGVRIDVDTRRLTFLQLTADKGWQKWQNDKMTNQTTLKEGLQLDFELGGGAWQKDDRLFNPGSLFDEEMFADEKKEQKQEPAPQLFVLSSGEVTPFTLSIFPKGQEPDEQWRVTAQENGTLRLLAPGESDEE</sequence>
<organism>
    <name type="scientific">Vibrio cholerae serotype O1 (strain ATCC 39315 / El Tor Inaba N16961)</name>
    <dbReference type="NCBI Taxonomy" id="243277"/>
    <lineage>
        <taxon>Bacteria</taxon>
        <taxon>Pseudomonadati</taxon>
        <taxon>Pseudomonadota</taxon>
        <taxon>Gammaproteobacteria</taxon>
        <taxon>Vibrionales</taxon>
        <taxon>Vibrionaceae</taxon>
        <taxon>Vibrio</taxon>
    </lineage>
</organism>
<protein>
    <recommendedName>
        <fullName>Type II secretion system protein H</fullName>
        <shortName>T2SS minor pseudopilin H</shortName>
    </recommendedName>
    <alternativeName>
        <fullName>Cholera toxin secretion protein EpsH</fullName>
    </alternativeName>
    <alternativeName>
        <fullName>General secretion pathway protein H</fullName>
    </alternativeName>
</protein>
<gene>
    <name type="primary">epsH</name>
    <name type="ordered locus">VC_2729</name>
</gene>
<name>GSPH_VIBCH</name>
<feature type="propeptide" id="PRO_0000024226" description="Leader sequence" evidence="3">
    <location>
        <begin position="1"/>
        <end position="6"/>
    </location>
</feature>
<feature type="chain" id="PRO_0000024227" description="Type II secretion system protein H">
    <location>
        <begin position="7"/>
        <end position="194"/>
    </location>
</feature>
<feature type="transmembrane region" description="Helical" evidence="2">
    <location>
        <begin position="12"/>
        <end position="32"/>
    </location>
</feature>
<feature type="modified residue" description="N-methylphenylalanine" evidence="3">
    <location>
        <position position="7"/>
    </location>
</feature>
<feature type="helix" evidence="7">
    <location>
        <begin position="34"/>
        <end position="59"/>
    </location>
</feature>
<feature type="strand" evidence="7">
    <location>
        <begin position="63"/>
        <end position="68"/>
    </location>
</feature>
<feature type="turn" evidence="7">
    <location>
        <begin position="69"/>
        <end position="72"/>
    </location>
</feature>
<feature type="strand" evidence="7">
    <location>
        <begin position="73"/>
        <end position="80"/>
    </location>
</feature>
<feature type="turn" evidence="7">
    <location>
        <begin position="81"/>
        <end position="83"/>
    </location>
</feature>
<feature type="strand" evidence="7">
    <location>
        <begin position="84"/>
        <end position="87"/>
    </location>
</feature>
<feature type="strand" evidence="7">
    <location>
        <begin position="91"/>
        <end position="93"/>
    </location>
</feature>
<feature type="strand" evidence="7">
    <location>
        <begin position="95"/>
        <end position="98"/>
    </location>
</feature>
<feature type="strand" evidence="7">
    <location>
        <begin position="103"/>
        <end position="109"/>
    </location>
</feature>
<feature type="helix" evidence="7">
    <location>
        <begin position="123"/>
        <end position="125"/>
    </location>
</feature>
<feature type="strand" evidence="7">
    <location>
        <begin position="146"/>
        <end position="149"/>
    </location>
</feature>
<feature type="strand" evidence="7">
    <location>
        <begin position="158"/>
        <end position="164"/>
    </location>
</feature>
<feature type="strand" evidence="7">
    <location>
        <begin position="172"/>
        <end position="177"/>
    </location>
</feature>
<feature type="strand" evidence="7">
    <location>
        <begin position="183"/>
        <end position="186"/>
    </location>
</feature>